<evidence type="ECO:0000269" key="1">
    <source>
    </source>
</evidence>
<evidence type="ECO:0000305" key="2"/>
<feature type="chain" id="PRO_0000199689" description="Profilin">
    <location>
        <begin position="1"/>
        <end position="134"/>
    </location>
</feature>
<comment type="function">
    <text evidence="1">Participates in either intracellular transport of viral proteins or intercellular spread of the virus. Cellular profilins modulate actin filament dynamics (polymerization and depolymerization) via direct binding to actin through an actin-binding domain as well as by modulation of other actin-binding proteins. In contrast to cellular homologs, the poxvirus profilins seem to bind actin only weakly.</text>
</comment>
<comment type="subunit">
    <text evidence="1">Interacts with host Tpm1. Interacts with protein A25.</text>
</comment>
<comment type="subcellular location">
    <subcellularLocation>
        <location evidence="1">Host cytoplasm</location>
    </subcellularLocation>
    <text>Localizes to inclusion bodies formed by viral A25/ATI protein in the cytoplasm of the host cell.</text>
</comment>
<comment type="similarity">
    <text evidence="2">Belongs to the profilin family.</text>
</comment>
<organism>
    <name type="scientific">Ectromelia virus (strain Moscow)</name>
    <name type="common">ECTV</name>
    <name type="synonym">Mousepox virus</name>
    <dbReference type="NCBI Taxonomy" id="265874"/>
    <lineage>
        <taxon>Viruses</taxon>
        <taxon>Varidnaviria</taxon>
        <taxon>Bamfordvirae</taxon>
        <taxon>Nucleocytoviricota</taxon>
        <taxon>Pokkesviricetes</taxon>
        <taxon>Chitovirales</taxon>
        <taxon>Poxviridae</taxon>
        <taxon>Chordopoxvirinae</taxon>
        <taxon>Orthopoxvirus</taxon>
        <taxon>Ectromelia virus</taxon>
    </lineage>
</organism>
<proteinExistence type="evidence at protein level"/>
<accession>Q8JL78</accession>
<dbReference type="EMBL" id="AF012825">
    <property type="protein sequence ID" value="AAM92446.1"/>
    <property type="molecule type" value="Genomic_DNA"/>
</dbReference>
<dbReference type="RefSeq" id="NP_671660.1">
    <property type="nucleotide sequence ID" value="NC_004105.1"/>
</dbReference>
<dbReference type="SMR" id="Q8JL78"/>
<dbReference type="IntAct" id="Q8JL78">
    <property type="interactions" value="2"/>
</dbReference>
<dbReference type="MINT" id="Q8JL78"/>
<dbReference type="GeneID" id="951539"/>
<dbReference type="KEGG" id="vg:951539"/>
<dbReference type="Proteomes" id="UP000172110">
    <property type="component" value="Segment"/>
</dbReference>
<dbReference type="GO" id="GO:0043657">
    <property type="term" value="C:host cell"/>
    <property type="evidence" value="ECO:0007669"/>
    <property type="project" value="GOC"/>
</dbReference>
<dbReference type="GO" id="GO:0030430">
    <property type="term" value="C:host cell cytoplasm"/>
    <property type="evidence" value="ECO:0007669"/>
    <property type="project" value="UniProtKB-SubCell"/>
</dbReference>
<dbReference type="GO" id="GO:0003779">
    <property type="term" value="F:actin binding"/>
    <property type="evidence" value="ECO:0007669"/>
    <property type="project" value="UniProtKB-KW"/>
</dbReference>
<dbReference type="GO" id="GO:0039680">
    <property type="term" value="P:actin-dependent intracellular transport of virus towards nucleus"/>
    <property type="evidence" value="ECO:0007669"/>
    <property type="project" value="UniProtKB-KW"/>
</dbReference>
<dbReference type="GO" id="GO:0046718">
    <property type="term" value="P:symbiont entry into host cell"/>
    <property type="evidence" value="ECO:0007669"/>
    <property type="project" value="UniProtKB-KW"/>
</dbReference>
<dbReference type="Gene3D" id="3.30.450.30">
    <property type="entry name" value="Dynein light chain 2a, cytoplasmic"/>
    <property type="match status" value="1"/>
</dbReference>
<dbReference type="InterPro" id="IPR048278">
    <property type="entry name" value="PFN"/>
</dbReference>
<dbReference type="InterPro" id="IPR005455">
    <property type="entry name" value="PFN_euk"/>
</dbReference>
<dbReference type="InterPro" id="IPR036140">
    <property type="entry name" value="PFN_sf"/>
</dbReference>
<dbReference type="Pfam" id="PF00235">
    <property type="entry name" value="Profilin"/>
    <property type="match status" value="1"/>
</dbReference>
<dbReference type="SMART" id="SM00392">
    <property type="entry name" value="PROF"/>
    <property type="match status" value="1"/>
</dbReference>
<dbReference type="SUPFAM" id="SSF55770">
    <property type="entry name" value="Profilin (actin-binding protein)"/>
    <property type="match status" value="1"/>
</dbReference>
<name>PROF_ECTVM</name>
<organismHost>
    <name type="scientific">Mus musculus</name>
    <name type="common">Mouse</name>
    <dbReference type="NCBI Taxonomy" id="10090"/>
</organismHost>
<keyword id="KW-0009">Actin-binding</keyword>
<keyword id="KW-1178">Actin-dependent inwards viral transport</keyword>
<keyword id="KW-1176">Cytoplasmic inwards viral transport</keyword>
<keyword id="KW-1035">Host cytoplasm</keyword>
<keyword id="KW-0945">Host-virus interaction</keyword>
<keyword id="KW-1160">Virus entry into host cell</keyword>
<sequence length="134" mass="15195">MAAEWHKIIEDVSKNNKFEDAAIVDYKTKKNVLAAIPNRTFAKIIPGEVIALITNRNILKPRIGQKFFIVYTNSLMDENTYTMELLTGYAPVSPIVIARTHTALIFLMGKPTTSRREVYRTCRDYATNVRATGN</sequence>
<protein>
    <recommendedName>
        <fullName>Profilin</fullName>
    </recommendedName>
</protein>
<gene>
    <name type="ordered locus">EVM141</name>
</gene>
<reference key="1">
    <citation type="journal article" date="2003" name="Virology">
        <title>The genomic sequence of Ectromelia virus, the causative agent of mousepox.</title>
        <authorList>
            <person name="Chen N."/>
            <person name="Danila M.I."/>
            <person name="Feng Z."/>
            <person name="Buller R.M."/>
            <person name="Wang C."/>
            <person name="Han X."/>
            <person name="Lefkowitz E.J."/>
            <person name="Upton C."/>
        </authorList>
    </citation>
    <scope>NUCLEOTIDE SEQUENCE [LARGE SCALE GENOMIC DNA]</scope>
</reference>
<reference key="2">
    <citation type="journal article" date="2007" name="Virol. J.">
        <title>An ectromelia virus profilin homolog interacts with cellular tropomyosin and viral A-type inclusion protein.</title>
        <authorList>
            <person name="Butler-Cole C."/>
            <person name="Wagner M.J."/>
            <person name="Da Silva M."/>
            <person name="Brown G.D."/>
            <person name="Burke R.D."/>
            <person name="Upton C."/>
        </authorList>
    </citation>
    <scope>FUNCTION</scope>
    <scope>SUBCELLULAR LOCATION</scope>
    <scope>INTERACTION WITH HOST TPM1 AND PROTEIN A25</scope>
</reference>